<keyword id="KW-1003">Cell membrane</keyword>
<keyword id="KW-0472">Membrane</keyword>
<keyword id="KW-1185">Reference proteome</keyword>
<keyword id="KW-0812">Transmembrane</keyword>
<keyword id="KW-1133">Transmembrane helix</keyword>
<dbReference type="EMBL" id="AE000516">
    <property type="protein sequence ID" value="AAK46949.1"/>
    <property type="molecule type" value="Genomic_DNA"/>
</dbReference>
<dbReference type="PIR" id="D70728">
    <property type="entry name" value="D70728"/>
</dbReference>
<dbReference type="RefSeq" id="WP_010924546.1">
    <property type="nucleotide sequence ID" value="NC_002755.2"/>
</dbReference>
<dbReference type="KEGG" id="mtc:MT2637"/>
<dbReference type="HOGENOM" id="CLU_065990_1_0_11"/>
<dbReference type="Proteomes" id="UP000001020">
    <property type="component" value="Chromosome"/>
</dbReference>
<dbReference type="GO" id="GO:0005886">
    <property type="term" value="C:plasma membrane"/>
    <property type="evidence" value="ECO:0007669"/>
    <property type="project" value="UniProtKB-SubCell"/>
</dbReference>
<sequence>MSQPPEHPGNPADPQGGNQGAGSYPPPGYGAPPPPPGYGXPPGTYLPPGYNAPPPPPGYGPPPGPPPPGYPTHLQSSGFSVGDAISWSWNRFTQNAVTLVVPVLAYAVALAAVIGATAGLVVALSDRATTAYTNTSGVSSESVDITMTPAAGIVMFLGYIALFALVLYMHAGILTGCLDIADGKPVTIATFFRPRNLGLVLVTGLLIVALTFIGGLLCVIPGLIFGFVAQFAVAFAVDRSTSPIDSVKASIETVGSNIGGSVLSWLAQLTAVLVGELLCFVGMLIGIPVAALIHVYTYRKLSGGQVVEAVRPAPPVGWPPGPQLA</sequence>
<protein>
    <recommendedName>
        <fullName>Uncharacterized protein MT2637</fullName>
    </recommendedName>
</protein>
<evidence type="ECO:0000255" key="1"/>
<evidence type="ECO:0000256" key="2">
    <source>
        <dbReference type="SAM" id="MobiDB-lite"/>
    </source>
</evidence>
<evidence type="ECO:0000305" key="3"/>
<name>Y2560_MYCTO</name>
<gene>
    <name type="ordered locus">MT2637</name>
</gene>
<comment type="subcellular location">
    <subcellularLocation>
        <location evidence="3">Cell membrane</location>
        <topology evidence="3">Multi-pass membrane protein</topology>
    </subcellularLocation>
</comment>
<reference key="1">
    <citation type="journal article" date="2002" name="J. Bacteriol.">
        <title>Whole-genome comparison of Mycobacterium tuberculosis clinical and laboratory strains.</title>
        <authorList>
            <person name="Fleischmann R.D."/>
            <person name="Alland D."/>
            <person name="Eisen J.A."/>
            <person name="Carpenter L."/>
            <person name="White O."/>
            <person name="Peterson J.D."/>
            <person name="DeBoy R.T."/>
            <person name="Dodson R.J."/>
            <person name="Gwinn M.L."/>
            <person name="Haft D.H."/>
            <person name="Hickey E.K."/>
            <person name="Kolonay J.F."/>
            <person name="Nelson W.C."/>
            <person name="Umayam L.A."/>
            <person name="Ermolaeva M.D."/>
            <person name="Salzberg S.L."/>
            <person name="Delcher A."/>
            <person name="Utterback T.R."/>
            <person name="Weidman J.F."/>
            <person name="Khouri H.M."/>
            <person name="Gill J."/>
            <person name="Mikula A."/>
            <person name="Bishai W."/>
            <person name="Jacobs W.R. Jr."/>
            <person name="Venter J.C."/>
            <person name="Fraser C.M."/>
        </authorList>
    </citation>
    <scope>NUCLEOTIDE SEQUENCE [LARGE SCALE GENOMIC DNA]</scope>
    <source>
        <strain>CDC 1551 / Oshkosh</strain>
    </source>
</reference>
<accession>P9WLA0</accession>
<accession>L0TA56</accession>
<accession>Q50738</accession>
<proteinExistence type="predicted"/>
<organism>
    <name type="scientific">Mycobacterium tuberculosis (strain CDC 1551 / Oshkosh)</name>
    <dbReference type="NCBI Taxonomy" id="83331"/>
    <lineage>
        <taxon>Bacteria</taxon>
        <taxon>Bacillati</taxon>
        <taxon>Actinomycetota</taxon>
        <taxon>Actinomycetes</taxon>
        <taxon>Mycobacteriales</taxon>
        <taxon>Mycobacteriaceae</taxon>
        <taxon>Mycobacterium</taxon>
        <taxon>Mycobacterium tuberculosis complex</taxon>
    </lineage>
</organism>
<feature type="chain" id="PRO_0000427515" description="Uncharacterized protein MT2637">
    <location>
        <begin position="1"/>
        <end position="325"/>
    </location>
</feature>
<feature type="transmembrane region" description="Helical" evidence="1">
    <location>
        <begin position="96"/>
        <end position="116"/>
    </location>
</feature>
<feature type="transmembrane region" description="Helical" evidence="1">
    <location>
        <begin position="153"/>
        <end position="173"/>
    </location>
</feature>
<feature type="transmembrane region" description="Helical" evidence="1">
    <location>
        <begin position="205"/>
        <end position="225"/>
    </location>
</feature>
<feature type="transmembrane region" description="Helical" evidence="1">
    <location>
        <begin position="273"/>
        <end position="293"/>
    </location>
</feature>
<feature type="region of interest" description="Disordered" evidence="2">
    <location>
        <begin position="1"/>
        <end position="75"/>
    </location>
</feature>
<feature type="compositionally biased region" description="Pro residues" evidence="2">
    <location>
        <begin position="24"/>
        <end position="39"/>
    </location>
</feature>
<feature type="compositionally biased region" description="Pro residues" evidence="2">
    <location>
        <begin position="50"/>
        <end position="70"/>
    </location>
</feature>